<protein>
    <recommendedName>
        <fullName evidence="13">Adenosine deaminase 2</fullName>
        <ecNumber evidence="4 7">3.5.4.4</ecNumber>
    </recommendedName>
    <alternativeName>
        <fullName>Cat eye syndrome critical region protein 1</fullName>
    </alternativeName>
</protein>
<feature type="signal peptide" evidence="1">
    <location>
        <begin position="1"/>
        <end position="29"/>
    </location>
</feature>
<feature type="chain" id="PRO_0000006725" description="Adenosine deaminase 2">
    <location>
        <begin position="30"/>
        <end position="511"/>
    </location>
</feature>
<feature type="region of interest" description="Dimerization">
    <location>
        <begin position="30"/>
        <end position="100"/>
    </location>
</feature>
<feature type="region of interest" description="PRB domain">
    <location>
        <begin position="127"/>
        <end position="185"/>
    </location>
</feature>
<feature type="active site" description="Proton donor" evidence="12">
    <location>
        <position position="359"/>
    </location>
</feature>
<feature type="active site" description="Proton acceptor" evidence="12">
    <location>
        <position position="384"/>
    </location>
</feature>
<feature type="binding site">
    <location>
        <position position="112"/>
    </location>
    <ligand>
        <name>Zn(2+)</name>
        <dbReference type="ChEBI" id="CHEBI:29105"/>
        <note>catalytic</note>
    </ligand>
</feature>
<feature type="binding site">
    <location>
        <position position="114"/>
    </location>
    <ligand>
        <name>Zn(2+)</name>
        <dbReference type="ChEBI" id="CHEBI:29105"/>
        <note>catalytic</note>
    </ligand>
</feature>
<feature type="binding site">
    <location>
        <position position="115"/>
    </location>
    <ligand>
        <name>substrate</name>
    </ligand>
</feature>
<feature type="binding site">
    <location>
        <begin position="204"/>
        <end position="211"/>
    </location>
    <ligand>
        <name>substrate</name>
    </ligand>
</feature>
<feature type="binding site">
    <location>
        <position position="293"/>
    </location>
    <ligand>
        <name>substrate</name>
    </ligand>
</feature>
<feature type="binding site">
    <location>
        <position position="326"/>
    </location>
    <ligand>
        <name>substrate</name>
    </ligand>
</feature>
<feature type="binding site">
    <location>
        <position position="356"/>
    </location>
    <ligand>
        <name>Zn(2+)</name>
        <dbReference type="ChEBI" id="CHEBI:29105"/>
        <note>catalytic</note>
    </ligand>
</feature>
<feature type="binding site">
    <location>
        <position position="441"/>
    </location>
    <ligand>
        <name>Zn(2+)</name>
        <dbReference type="ChEBI" id="CHEBI:29105"/>
        <note>catalytic</note>
    </ligand>
</feature>
<feature type="binding site">
    <location>
        <position position="442"/>
    </location>
    <ligand>
        <name>substrate</name>
    </ligand>
</feature>
<feature type="glycosylation site" description="N-linked (GlcNAc...) asparagine" evidence="6">
    <location>
        <position position="127"/>
    </location>
</feature>
<feature type="glycosylation site" description="N-linked (GlcNAc...) asparagine" evidence="5">
    <location>
        <position position="174"/>
    </location>
</feature>
<feature type="glycosylation site" description="N-linked (GlcNAc...) asparagine" evidence="6">
    <location>
        <position position="185"/>
    </location>
</feature>
<feature type="glycosylation site" description="N-linked (GlcNAc...) asparagine" evidence="5 6">
    <location>
        <position position="378"/>
    </location>
</feature>
<feature type="disulfide bond" evidence="6">
    <location>
        <begin position="137"/>
        <end position="159"/>
    </location>
</feature>
<feature type="splice variant" id="VSP_041509" description="In isoform 2." evidence="11">
    <location>
        <begin position="1"/>
        <end position="241"/>
    </location>
</feature>
<feature type="splice variant" id="VSP_041510" description="In isoform 2." evidence="11">
    <original>YMEIRARLLP</original>
    <variation>MDSLEWNWAL</variation>
    <location>
        <begin position="242"/>
        <end position="251"/>
    </location>
</feature>
<feature type="sequence variant" id="VAR_071137" description="In VAIHS; there is a decreased expression of the mutant protein compared to wild-type; dbSNP:rs202134424." evidence="8 9">
    <original>G</original>
    <variation>R</variation>
    <location>
        <position position="47"/>
    </location>
</feature>
<feature type="sequence variant" id="VAR_071138" description="In VAIHS; dbSNP:rs200930463." evidence="9">
    <original>G</original>
    <variation>V</variation>
    <location>
        <position position="47"/>
    </location>
</feature>
<feature type="sequence variant" id="VAR_071139" description="In VAIHS; dbSNP:rs587777240." evidence="8">
    <original>A</original>
    <variation>D</variation>
    <location>
        <position position="109"/>
    </location>
</feature>
<feature type="sequence variant" id="VAR_071140" description="In VAIHS; dbSNP:rs587777241." evidence="8">
    <original>H</original>
    <variation>Q</variation>
    <location>
        <position position="112"/>
    </location>
</feature>
<feature type="sequence variant" id="VAR_072562" description="In SNDNS." evidence="10">
    <original>V</original>
    <variation>A</variation>
    <location>
        <position position="119"/>
    </location>
</feature>
<feature type="sequence variant" id="VAR_072563" description="In SNDNS." evidence="10">
    <original>G</original>
    <variation>S</variation>
    <location>
        <position position="142"/>
    </location>
</feature>
<feature type="sequence variant" id="VAR_071141" description="In VAIHS; dbSNP:rs77563738." evidence="8 9">
    <original>R</original>
    <variation>Q</variation>
    <location>
        <position position="169"/>
    </location>
</feature>
<feature type="sequence variant" id="VAR_071142" description="In VAIHS; dbSNP:rs148936893." evidence="9">
    <original>P</original>
    <variation>L</variation>
    <location>
        <position position="251"/>
    </location>
</feature>
<feature type="sequence variant" id="VAR_071143" description="In VAIHS; dbSNP:rs587777242." evidence="9">
    <original>W</original>
    <variation>S</variation>
    <location>
        <position position="264"/>
    </location>
</feature>
<feature type="sequence variant" id="VAR_029802" description="In dbSNP:rs2231495." evidence="2 3">
    <original>H</original>
    <variation>R</variation>
    <location>
        <position position="335"/>
    </location>
</feature>
<feature type="sequence variant" id="VAR_071144" description="In VAIHS; dbSNP:rs376785840." evidence="8">
    <original>Y</original>
    <variation>C</variation>
    <location>
        <position position="453"/>
    </location>
</feature>
<feature type="mutagenesis site" description="Abolishes secretion." evidence="6">
    <original>C</original>
    <variation>G</variation>
    <location>
        <position position="137"/>
    </location>
</feature>
<feature type="mutagenesis site" description="Reduces dimerization and enzyme activity." evidence="6">
    <original>W</original>
    <variation>G</variation>
    <location>
        <position position="362"/>
    </location>
</feature>
<feature type="sequence conflict" description="In Ref. 3; BAC11148." evidence="12" ref="3">
    <original>E</original>
    <variation>G</variation>
    <location>
        <position position="359"/>
    </location>
</feature>
<feature type="sequence conflict" description="In Ref. 6; AAH51755." evidence="12" ref="6">
    <original>V</original>
    <variation>L</variation>
    <location>
        <position position="394"/>
    </location>
</feature>
<feature type="helix" evidence="14">
    <location>
        <begin position="30"/>
        <end position="44"/>
    </location>
</feature>
<feature type="turn" evidence="14">
    <location>
        <begin position="46"/>
        <end position="49"/>
    </location>
</feature>
<feature type="helix" evidence="14">
    <location>
        <begin position="54"/>
        <end position="77"/>
    </location>
</feature>
<feature type="helix" evidence="14">
    <location>
        <begin position="81"/>
        <end position="83"/>
    </location>
</feature>
<feature type="helix" evidence="14">
    <location>
        <begin position="86"/>
        <end position="93"/>
    </location>
</feature>
<feature type="helix" evidence="14">
    <location>
        <begin position="97"/>
        <end position="104"/>
    </location>
</feature>
<feature type="strand" evidence="14">
    <location>
        <begin position="108"/>
        <end position="114"/>
    </location>
</feature>
<feature type="strand" evidence="14">
    <location>
        <begin position="117"/>
        <end position="119"/>
    </location>
</feature>
<feature type="helix" evidence="14">
    <location>
        <begin position="121"/>
        <end position="126"/>
    </location>
</feature>
<feature type="helix" evidence="14">
    <location>
        <begin position="128"/>
        <end position="130"/>
    </location>
</feature>
<feature type="strand" evidence="14">
    <location>
        <begin position="134"/>
        <end position="138"/>
    </location>
</feature>
<feature type="strand" evidence="14">
    <location>
        <begin position="144"/>
        <end position="148"/>
    </location>
</feature>
<feature type="helix" evidence="14">
    <location>
        <begin position="165"/>
        <end position="170"/>
    </location>
</feature>
<feature type="strand" evidence="15">
    <location>
        <begin position="171"/>
        <end position="173"/>
    </location>
</feature>
<feature type="helix" evidence="14">
    <location>
        <begin position="175"/>
        <end position="185"/>
    </location>
</feature>
<feature type="helix" evidence="14">
    <location>
        <begin position="193"/>
        <end position="196"/>
    </location>
</feature>
<feature type="helix" evidence="14">
    <location>
        <begin position="200"/>
        <end position="218"/>
    </location>
</feature>
<feature type="helix" evidence="14">
    <location>
        <begin position="221"/>
        <end position="237"/>
    </location>
</feature>
<feature type="strand" evidence="14">
    <location>
        <begin position="240"/>
        <end position="247"/>
    </location>
</feature>
<feature type="helix" evidence="14">
    <location>
        <begin position="262"/>
        <end position="279"/>
    </location>
</feature>
<feature type="strand" evidence="14">
    <location>
        <begin position="285"/>
        <end position="293"/>
    </location>
</feature>
<feature type="helix" evidence="14">
    <location>
        <begin position="298"/>
        <end position="314"/>
    </location>
</feature>
<feature type="turn" evidence="14">
    <location>
        <begin position="316"/>
        <end position="318"/>
    </location>
</feature>
<feature type="strand" evidence="14">
    <location>
        <begin position="319"/>
        <end position="326"/>
    </location>
</feature>
<feature type="turn" evidence="14">
    <location>
        <begin position="328"/>
        <end position="330"/>
    </location>
</feature>
<feature type="helix" evidence="14">
    <location>
        <begin position="335"/>
        <end position="337"/>
    </location>
</feature>
<feature type="helix" evidence="14">
    <location>
        <begin position="338"/>
        <end position="341"/>
    </location>
</feature>
<feature type="helix" evidence="14">
    <location>
        <begin position="343"/>
        <end position="346"/>
    </location>
</feature>
<feature type="turn" evidence="14">
    <location>
        <begin position="366"/>
        <end position="369"/>
    </location>
</feature>
<feature type="helix" evidence="14">
    <location>
        <begin position="370"/>
        <end position="376"/>
    </location>
</feature>
<feature type="strand" evidence="14">
    <location>
        <begin position="380"/>
        <end position="384"/>
    </location>
</feature>
<feature type="helix" evidence="14">
    <location>
        <begin position="388"/>
        <end position="390"/>
    </location>
</feature>
<feature type="helix" evidence="14">
    <location>
        <begin position="392"/>
        <end position="400"/>
    </location>
</feature>
<feature type="strand" evidence="14">
    <location>
        <begin position="405"/>
        <end position="407"/>
    </location>
</feature>
<feature type="helix" evidence="14">
    <location>
        <begin position="409"/>
        <end position="414"/>
    </location>
</feature>
<feature type="helix" evidence="14">
    <location>
        <begin position="421"/>
        <end position="423"/>
    </location>
</feature>
<feature type="helix" evidence="14">
    <location>
        <begin position="426"/>
        <end position="431"/>
    </location>
</feature>
<feature type="strand" evidence="14">
    <location>
        <begin position="436"/>
        <end position="438"/>
    </location>
</feature>
<feature type="helix" evidence="14">
    <location>
        <begin position="443"/>
        <end position="446"/>
    </location>
</feature>
<feature type="helix" evidence="14">
    <location>
        <begin position="452"/>
        <end position="460"/>
    </location>
</feature>
<feature type="helix" evidence="14">
    <location>
        <begin position="469"/>
        <end position="481"/>
    </location>
</feature>
<feature type="strand" evidence="14">
    <location>
        <begin position="483"/>
        <end position="485"/>
    </location>
</feature>
<feature type="helix" evidence="14">
    <location>
        <begin position="487"/>
        <end position="509"/>
    </location>
</feature>
<proteinExistence type="evidence at protein level"/>
<evidence type="ECO:0000255" key="1"/>
<evidence type="ECO:0000269" key="2">
    <source>
    </source>
</evidence>
<evidence type="ECO:0000269" key="3">
    <source>
    </source>
</evidence>
<evidence type="ECO:0000269" key="4">
    <source>
    </source>
</evidence>
<evidence type="ECO:0000269" key="5">
    <source>
    </source>
</evidence>
<evidence type="ECO:0000269" key="6">
    <source>
    </source>
</evidence>
<evidence type="ECO:0000269" key="7">
    <source>
    </source>
</evidence>
<evidence type="ECO:0000269" key="8">
    <source>
    </source>
</evidence>
<evidence type="ECO:0000269" key="9">
    <source>
    </source>
</evidence>
<evidence type="ECO:0000269" key="10">
    <source>
    </source>
</evidence>
<evidence type="ECO:0000303" key="11">
    <source>
    </source>
</evidence>
<evidence type="ECO:0000305" key="12"/>
<evidence type="ECO:0000312" key="13">
    <source>
        <dbReference type="HGNC" id="HGNC:1839"/>
    </source>
</evidence>
<evidence type="ECO:0007829" key="14">
    <source>
        <dbReference type="PDB" id="3LGD"/>
    </source>
</evidence>
<evidence type="ECO:0007829" key="15">
    <source>
        <dbReference type="PDB" id="3LGG"/>
    </source>
</evidence>
<keyword id="KW-0002">3D-structure</keyword>
<keyword id="KW-0025">Alternative splicing</keyword>
<keyword id="KW-0225">Disease variant</keyword>
<keyword id="KW-1015">Disulfide bond</keyword>
<keyword id="KW-0325">Glycoprotein</keyword>
<keyword id="KW-0358">Heparin-binding</keyword>
<keyword id="KW-0378">Hydrolase</keyword>
<keyword id="KW-0479">Metal-binding</keyword>
<keyword id="KW-1267">Proteomics identification</keyword>
<keyword id="KW-1185">Reference proteome</keyword>
<keyword id="KW-0964">Secreted</keyword>
<keyword id="KW-0732">Signal</keyword>
<keyword id="KW-0862">Zinc</keyword>
<gene>
    <name evidence="13" type="primary">ADA2</name>
    <name type="synonym">ADGF</name>
    <name type="synonym">CECR1</name>
    <name type="synonym">IDGFL</name>
</gene>
<name>ADA2_HUMAN</name>
<comment type="function">
    <text evidence="6 7">Adenosine deaminase that may contribute to the degradation of extracellular adenosine, a signaling molecule that controls a variety of cellular responses. Requires elevated adenosine levels for optimal enzyme activity. Binds to cell surfaces via proteoglycans and may play a role in the regulation of cell proliferation and differentiation, independently of its enzyme activity.</text>
</comment>
<comment type="catalytic activity">
    <reaction evidence="4 7">
        <text>adenosine + H2O + H(+) = inosine + NH4(+)</text>
        <dbReference type="Rhea" id="RHEA:24408"/>
        <dbReference type="ChEBI" id="CHEBI:15377"/>
        <dbReference type="ChEBI" id="CHEBI:15378"/>
        <dbReference type="ChEBI" id="CHEBI:16335"/>
        <dbReference type="ChEBI" id="CHEBI:17596"/>
        <dbReference type="ChEBI" id="CHEBI:28938"/>
        <dbReference type="EC" id="3.5.4.4"/>
    </reaction>
</comment>
<comment type="cofactor">
    <cofactor evidence="6">
        <name>Zn(2+)</name>
        <dbReference type="ChEBI" id="CHEBI:29105"/>
    </cofactor>
    <text evidence="6">Binds 1 zinc ion per subunit.</text>
</comment>
<comment type="biophysicochemical properties">
    <kinetics>
        <KM evidence="4">2.25 mM for adenosine</KM>
    </kinetics>
    <phDependence>
        <text evidence="4">Optimum pH is 6.6.</text>
    </phDependence>
</comment>
<comment type="subunit">
    <text evidence="6 7">Homodimer. Interacts with adenosine receptors. Binds heparin.</text>
</comment>
<comment type="subcellular location">
    <subcellularLocation>
        <location evidence="4 6 7">Secreted</location>
    </subcellularLocation>
</comment>
<comment type="alternative products">
    <event type="alternative splicing"/>
    <isoform>
        <id>Q9NZK5-1</id>
        <name>1</name>
        <sequence type="displayed"/>
    </isoform>
    <isoform>
        <id>Q9NZK5-2</id>
        <name>2</name>
        <sequence type="described" ref="VSP_041509 VSP_041510"/>
    </isoform>
</comment>
<comment type="tissue specificity">
    <text evidence="4">Detected in blood plasma (at protein level). Widely expressed, with most abundant expression in human adult heart, lung, lymphoblasts, and placenta as well as fetal lung, liver, and kidney. In embryo, expressed in the outflow tract and atrium of the developing heart, the VII/VIII cranial nerve ganglion, and the notochord.</text>
</comment>
<comment type="domain">
    <text evidence="6">The PRB domain is involved in receptor binding, and may be responsible for the cytokine-like growth factor activity due to it's sharing of several structural properties with chemokines.</text>
</comment>
<comment type="domain">
    <text evidence="6">High-affinity binding to heparin/glycosaminoclycan (GAG) is mediated by a large, highly positively charged surface at the interface of dimer's subunits involving approximately residues 30-45, 389-396, and 422-428.</text>
</comment>
<comment type="disease" evidence="8 9">
    <disease id="DI-04055">
        <name>Vasculitis, autoinflammation, immunodeficiency, and hematologic defects syndrome</name>
        <acronym>VAIHS</acronym>
        <description>An autosomal recessive, systemic necrotizing vasculitis that affects medium and small arteries. The ensuing tissue ischemia can affect any organ, including the skin, musculoskeletal system, kidneys, gastrointestinal tract, and the cardiovascular and nervous systems. Organ involvement and disease severity are highly variable. Clinical features include recurrent ischemic stroke affecting the small vessels of the brain and resulting in neurologic dysfunction, recurrent fever, myalgias, livedoid rash, gastrointestinal pain and hepatosplenomegaly.</description>
        <dbReference type="MIM" id="615688"/>
    </disease>
    <text>The disease is caused by variants affecting the gene represented in this entry.</text>
</comment>
<comment type="disease" evidence="10">
    <disease id="DI-04206">
        <name>Sneddon syndrome</name>
        <acronym>SNDNS</acronym>
        <description>An autosomal recessive, systemic non-inflammatory thrombotic vasculopathy characterized by the association of livedo racemosa, and in some cases livedo reticularis, with cerebrovascular disease. Livedo racemosa is a persistent net-like violaceous-cyanotic, mottled discoloration of the skin affecting the legs, the arms, the buttocks and the trunk; livedo reticularis is limited to the extremities and is visible only in the cold. Cerebrovascular features include recurrent transient ischemic attacks, infarcts, and rarely spinal strokes or intracranial or subarachnoid hemorrhages. Headache and vertigo may precede the onset of livedo racemosa and cerebrovascular manifestations by several years. Rare neurologic symptoms include seizures, chorea, or myelopathies.</description>
        <dbReference type="MIM" id="182410"/>
    </disease>
    <text>The disease is caused by variants affecting the gene represented in this entry.</text>
</comment>
<comment type="miscellaneous">
    <text>Candidate gene for the Cat Eye Syndrome (CES), a developmental disorder associated with the duplication of a 2 Mb region of 22q11.2. Duplication usually takes in the form of a surpernumerary bisatellited isodicentric chromosome, resulting in four copies of the region (represents an inv dup(22)(q11)). CES is characterized clinically by the combination of coloboma of the iris and anal atresia with fistula, downslanting palpebral fissures, preauricular tags and/or pits, frequent occurrence of heart and renal malformations, and normal or near-normal mental development.</text>
</comment>
<comment type="similarity">
    <text evidence="12">Belongs to the metallo-dependent hydrolases superfamily. Adenosine and AMP deaminases family. ADGF subfamily.</text>
</comment>
<organism>
    <name type="scientific">Homo sapiens</name>
    <name type="common">Human</name>
    <dbReference type="NCBI Taxonomy" id="9606"/>
    <lineage>
        <taxon>Eukaryota</taxon>
        <taxon>Metazoa</taxon>
        <taxon>Chordata</taxon>
        <taxon>Craniata</taxon>
        <taxon>Vertebrata</taxon>
        <taxon>Euteleostomi</taxon>
        <taxon>Mammalia</taxon>
        <taxon>Eutheria</taxon>
        <taxon>Euarchontoglires</taxon>
        <taxon>Primates</taxon>
        <taxon>Haplorrhini</taxon>
        <taxon>Catarrhini</taxon>
        <taxon>Hominidae</taxon>
        <taxon>Homo</taxon>
    </lineage>
</organism>
<accession>Q9NZK5</accession>
<accession>A8K9H4</accession>
<accession>Q6ICF1</accession>
<accession>Q86UB6</accession>
<accession>Q8NCJ2</accession>
<accession>Q96K41</accession>
<reference key="1">
    <citation type="journal article" date="2000" name="Genomics">
        <title>The human homolog of insect-derived growth factor, CECR1, is a candidate gene for features of cat eye syndrome.</title>
        <authorList>
            <person name="Riazi M.A."/>
            <person name="Brinkman-Mills P."/>
            <person name="Nguyen T."/>
            <person name="Pan H."/>
            <person name="Phan S."/>
            <person name="Ying F."/>
            <person name="Roe B.A."/>
            <person name="Tochigi J."/>
            <person name="Shimizu Y."/>
            <person name="Minoshima S."/>
            <person name="Shimizu N."/>
            <person name="Buchwald M."/>
            <person name="McDermid H.E."/>
        </authorList>
    </citation>
    <scope>NUCLEOTIDE SEQUENCE [MRNA] (ISOFORM 1)</scope>
    <scope>VARIANT ARG-335</scope>
</reference>
<reference key="2">
    <citation type="journal article" date="2004" name="Genome Biol.">
        <title>A genome annotation-driven approach to cloning the human ORFeome.</title>
        <authorList>
            <person name="Collins J.E."/>
            <person name="Wright C.L."/>
            <person name="Edwards C.A."/>
            <person name="Davis M.P."/>
            <person name="Grinham J.A."/>
            <person name="Cole C.G."/>
            <person name="Goward M.E."/>
            <person name="Aguado B."/>
            <person name="Mallya M."/>
            <person name="Mokrab Y."/>
            <person name="Huckle E.J."/>
            <person name="Beare D.M."/>
            <person name="Dunham I."/>
        </authorList>
    </citation>
    <scope>NUCLEOTIDE SEQUENCE [LARGE SCALE MRNA] (ISOFORM 1)</scope>
</reference>
<reference key="3">
    <citation type="journal article" date="2004" name="Nat. Genet.">
        <title>Complete sequencing and characterization of 21,243 full-length human cDNAs.</title>
        <authorList>
            <person name="Ota T."/>
            <person name="Suzuki Y."/>
            <person name="Nishikawa T."/>
            <person name="Otsuki T."/>
            <person name="Sugiyama T."/>
            <person name="Irie R."/>
            <person name="Wakamatsu A."/>
            <person name="Hayashi K."/>
            <person name="Sato H."/>
            <person name="Nagai K."/>
            <person name="Kimura K."/>
            <person name="Makita H."/>
            <person name="Sekine M."/>
            <person name="Obayashi M."/>
            <person name="Nishi T."/>
            <person name="Shibahara T."/>
            <person name="Tanaka T."/>
            <person name="Ishii S."/>
            <person name="Yamamoto J."/>
            <person name="Saito K."/>
            <person name="Kawai Y."/>
            <person name="Isono Y."/>
            <person name="Nakamura Y."/>
            <person name="Nagahari K."/>
            <person name="Murakami K."/>
            <person name="Yasuda T."/>
            <person name="Iwayanagi T."/>
            <person name="Wagatsuma M."/>
            <person name="Shiratori A."/>
            <person name="Sudo H."/>
            <person name="Hosoiri T."/>
            <person name="Kaku Y."/>
            <person name="Kodaira H."/>
            <person name="Kondo H."/>
            <person name="Sugawara M."/>
            <person name="Takahashi M."/>
            <person name="Kanda K."/>
            <person name="Yokoi T."/>
            <person name="Furuya T."/>
            <person name="Kikkawa E."/>
            <person name="Omura Y."/>
            <person name="Abe K."/>
            <person name="Kamihara K."/>
            <person name="Katsuta N."/>
            <person name="Sato K."/>
            <person name="Tanikawa M."/>
            <person name="Yamazaki M."/>
            <person name="Ninomiya K."/>
            <person name="Ishibashi T."/>
            <person name="Yamashita H."/>
            <person name="Murakawa K."/>
            <person name="Fujimori K."/>
            <person name="Tanai H."/>
            <person name="Kimata M."/>
            <person name="Watanabe M."/>
            <person name="Hiraoka S."/>
            <person name="Chiba Y."/>
            <person name="Ishida S."/>
            <person name="Ono Y."/>
            <person name="Takiguchi S."/>
            <person name="Watanabe S."/>
            <person name="Yosida M."/>
            <person name="Hotuta T."/>
            <person name="Kusano J."/>
            <person name="Kanehori K."/>
            <person name="Takahashi-Fujii A."/>
            <person name="Hara H."/>
            <person name="Tanase T.-O."/>
            <person name="Nomura Y."/>
            <person name="Togiya S."/>
            <person name="Komai F."/>
            <person name="Hara R."/>
            <person name="Takeuchi K."/>
            <person name="Arita M."/>
            <person name="Imose N."/>
            <person name="Musashino K."/>
            <person name="Yuuki H."/>
            <person name="Oshima A."/>
            <person name="Sasaki N."/>
            <person name="Aotsuka S."/>
            <person name="Yoshikawa Y."/>
            <person name="Matsunawa H."/>
            <person name="Ichihara T."/>
            <person name="Shiohata N."/>
            <person name="Sano S."/>
            <person name="Moriya S."/>
            <person name="Momiyama H."/>
            <person name="Satoh N."/>
            <person name="Takami S."/>
            <person name="Terashima Y."/>
            <person name="Suzuki O."/>
            <person name="Nakagawa S."/>
            <person name="Senoh A."/>
            <person name="Mizoguchi H."/>
            <person name="Goto Y."/>
            <person name="Shimizu F."/>
            <person name="Wakebe H."/>
            <person name="Hishigaki H."/>
            <person name="Watanabe T."/>
            <person name="Sugiyama A."/>
            <person name="Takemoto M."/>
            <person name="Kawakami B."/>
            <person name="Yamazaki M."/>
            <person name="Watanabe K."/>
            <person name="Kumagai A."/>
            <person name="Itakura S."/>
            <person name="Fukuzumi Y."/>
            <person name="Fujimori Y."/>
            <person name="Komiyama M."/>
            <person name="Tashiro H."/>
            <person name="Tanigami A."/>
            <person name="Fujiwara T."/>
            <person name="Ono T."/>
            <person name="Yamada K."/>
            <person name="Fujii Y."/>
            <person name="Ozaki K."/>
            <person name="Hirao M."/>
            <person name="Ohmori Y."/>
            <person name="Kawabata A."/>
            <person name="Hikiji T."/>
            <person name="Kobatake N."/>
            <person name="Inagaki H."/>
            <person name="Ikema Y."/>
            <person name="Okamoto S."/>
            <person name="Okitani R."/>
            <person name="Kawakami T."/>
            <person name="Noguchi S."/>
            <person name="Itoh T."/>
            <person name="Shigeta K."/>
            <person name="Senba T."/>
            <person name="Matsumura K."/>
            <person name="Nakajima Y."/>
            <person name="Mizuno T."/>
            <person name="Morinaga M."/>
            <person name="Sasaki M."/>
            <person name="Togashi T."/>
            <person name="Oyama M."/>
            <person name="Hata H."/>
            <person name="Watanabe M."/>
            <person name="Komatsu T."/>
            <person name="Mizushima-Sugano J."/>
            <person name="Satoh T."/>
            <person name="Shirai Y."/>
            <person name="Takahashi Y."/>
            <person name="Nakagawa K."/>
            <person name="Okumura K."/>
            <person name="Nagase T."/>
            <person name="Nomura N."/>
            <person name="Kikuchi H."/>
            <person name="Masuho Y."/>
            <person name="Yamashita R."/>
            <person name="Nakai K."/>
            <person name="Yada T."/>
            <person name="Nakamura Y."/>
            <person name="Ohara O."/>
            <person name="Isogai T."/>
            <person name="Sugano S."/>
        </authorList>
    </citation>
    <scope>NUCLEOTIDE SEQUENCE [LARGE SCALE MRNA] (ISOFORMS 1 AND 2)</scope>
    <scope>VARIANT ARG-335</scope>
    <source>
        <tissue>Thymus</tissue>
    </source>
</reference>
<reference key="4">
    <citation type="journal article" date="1999" name="Nature">
        <title>The DNA sequence of human chromosome 22.</title>
        <authorList>
            <person name="Dunham I."/>
            <person name="Hunt A.R."/>
            <person name="Collins J.E."/>
            <person name="Bruskiewich R."/>
            <person name="Beare D.M."/>
            <person name="Clamp M."/>
            <person name="Smink L.J."/>
            <person name="Ainscough R."/>
            <person name="Almeida J.P."/>
            <person name="Babbage A.K."/>
            <person name="Bagguley C."/>
            <person name="Bailey J."/>
            <person name="Barlow K.F."/>
            <person name="Bates K.N."/>
            <person name="Beasley O.P."/>
            <person name="Bird C.P."/>
            <person name="Blakey S.E."/>
            <person name="Bridgeman A.M."/>
            <person name="Buck D."/>
            <person name="Burgess J."/>
            <person name="Burrill W.D."/>
            <person name="Burton J."/>
            <person name="Carder C."/>
            <person name="Carter N.P."/>
            <person name="Chen Y."/>
            <person name="Clark G."/>
            <person name="Clegg S.M."/>
            <person name="Cobley V.E."/>
            <person name="Cole C.G."/>
            <person name="Collier R.E."/>
            <person name="Connor R."/>
            <person name="Conroy D."/>
            <person name="Corby N.R."/>
            <person name="Coville G.J."/>
            <person name="Cox A.V."/>
            <person name="Davis J."/>
            <person name="Dawson E."/>
            <person name="Dhami P.D."/>
            <person name="Dockree C."/>
            <person name="Dodsworth S.J."/>
            <person name="Durbin R.M."/>
            <person name="Ellington A.G."/>
            <person name="Evans K.L."/>
            <person name="Fey J.M."/>
            <person name="Fleming K."/>
            <person name="French L."/>
            <person name="Garner A.A."/>
            <person name="Gilbert J.G.R."/>
            <person name="Goward M.E."/>
            <person name="Grafham D.V."/>
            <person name="Griffiths M.N.D."/>
            <person name="Hall C."/>
            <person name="Hall R.E."/>
            <person name="Hall-Tamlyn G."/>
            <person name="Heathcott R.W."/>
            <person name="Ho S."/>
            <person name="Holmes S."/>
            <person name="Hunt S.E."/>
            <person name="Jones M.C."/>
            <person name="Kershaw J."/>
            <person name="Kimberley A.M."/>
            <person name="King A."/>
            <person name="Laird G.K."/>
            <person name="Langford C.F."/>
            <person name="Leversha M.A."/>
            <person name="Lloyd C."/>
            <person name="Lloyd D.M."/>
            <person name="Martyn I.D."/>
            <person name="Mashreghi-Mohammadi M."/>
            <person name="Matthews L.H."/>
            <person name="Mccann O.T."/>
            <person name="Mcclay J."/>
            <person name="Mclaren S."/>
            <person name="McMurray A.A."/>
            <person name="Milne S.A."/>
            <person name="Mortimore B.J."/>
            <person name="Odell C.N."/>
            <person name="Pavitt R."/>
            <person name="Pearce A.V."/>
            <person name="Pearson D."/>
            <person name="Phillimore B.J.C.T."/>
            <person name="Phillips S.H."/>
            <person name="Plumb R.W."/>
            <person name="Ramsay H."/>
            <person name="Ramsey Y."/>
            <person name="Rogers L."/>
            <person name="Ross M.T."/>
            <person name="Scott C.E."/>
            <person name="Sehra H.K."/>
            <person name="Skuce C.D."/>
            <person name="Smalley S."/>
            <person name="Smith M.L."/>
            <person name="Soderlund C."/>
            <person name="Spragon L."/>
            <person name="Steward C.A."/>
            <person name="Sulston J.E."/>
            <person name="Swann R.M."/>
            <person name="Vaudin M."/>
            <person name="Wall M."/>
            <person name="Wallis J.M."/>
            <person name="Whiteley M.N."/>
            <person name="Willey D.L."/>
            <person name="Williams L."/>
            <person name="Williams S.A."/>
            <person name="Williamson H."/>
            <person name="Wilmer T.E."/>
            <person name="Wilming L."/>
            <person name="Wright C.L."/>
            <person name="Hubbard T."/>
            <person name="Bentley D.R."/>
            <person name="Beck S."/>
            <person name="Rogers J."/>
            <person name="Shimizu N."/>
            <person name="Minoshima S."/>
            <person name="Kawasaki K."/>
            <person name="Sasaki T."/>
            <person name="Asakawa S."/>
            <person name="Kudoh J."/>
            <person name="Shintani A."/>
            <person name="Shibuya K."/>
            <person name="Yoshizaki Y."/>
            <person name="Aoki N."/>
            <person name="Mitsuyama S."/>
            <person name="Roe B.A."/>
            <person name="Chen F."/>
            <person name="Chu L."/>
            <person name="Crabtree J."/>
            <person name="Deschamps S."/>
            <person name="Do A."/>
            <person name="Do T."/>
            <person name="Dorman A."/>
            <person name="Fang F."/>
            <person name="Fu Y."/>
            <person name="Hu P."/>
            <person name="Hua A."/>
            <person name="Kenton S."/>
            <person name="Lai H."/>
            <person name="Lao H.I."/>
            <person name="Lewis J."/>
            <person name="Lewis S."/>
            <person name="Lin S.-P."/>
            <person name="Loh P."/>
            <person name="Malaj E."/>
            <person name="Nguyen T."/>
            <person name="Pan H."/>
            <person name="Phan S."/>
            <person name="Qi S."/>
            <person name="Qian Y."/>
            <person name="Ray L."/>
            <person name="Ren Q."/>
            <person name="Shaull S."/>
            <person name="Sloan D."/>
            <person name="Song L."/>
            <person name="Wang Q."/>
            <person name="Wang Y."/>
            <person name="Wang Z."/>
            <person name="White J."/>
            <person name="Willingham D."/>
            <person name="Wu H."/>
            <person name="Yao Z."/>
            <person name="Zhan M."/>
            <person name="Zhang G."/>
            <person name="Chissoe S."/>
            <person name="Murray J."/>
            <person name="Miller N."/>
            <person name="Minx P."/>
            <person name="Fulton R."/>
            <person name="Johnson D."/>
            <person name="Bemis G."/>
            <person name="Bentley D."/>
            <person name="Bradshaw H."/>
            <person name="Bourne S."/>
            <person name="Cordes M."/>
            <person name="Du Z."/>
            <person name="Fulton L."/>
            <person name="Goela D."/>
            <person name="Graves T."/>
            <person name="Hawkins J."/>
            <person name="Hinds K."/>
            <person name="Kemp K."/>
            <person name="Latreille P."/>
            <person name="Layman D."/>
            <person name="Ozersky P."/>
            <person name="Rohlfing T."/>
            <person name="Scheet P."/>
            <person name="Walker C."/>
            <person name="Wamsley A."/>
            <person name="Wohldmann P."/>
            <person name="Pepin K."/>
            <person name="Nelson J."/>
            <person name="Korf I."/>
            <person name="Bedell J.A."/>
            <person name="Hillier L.W."/>
            <person name="Mardis E."/>
            <person name="Waterston R."/>
            <person name="Wilson R."/>
            <person name="Emanuel B.S."/>
            <person name="Shaikh T."/>
            <person name="Kurahashi H."/>
            <person name="Saitta S."/>
            <person name="Budarf M.L."/>
            <person name="McDermid H.E."/>
            <person name="Johnson A."/>
            <person name="Wong A.C.C."/>
            <person name="Morrow B.E."/>
            <person name="Edelmann L."/>
            <person name="Kim U.J."/>
            <person name="Shizuya H."/>
            <person name="Simon M.I."/>
            <person name="Dumanski J.P."/>
            <person name="Peyrard M."/>
            <person name="Kedra D."/>
            <person name="Seroussi E."/>
            <person name="Fransson I."/>
            <person name="Tapia I."/>
            <person name="Bruder C.E."/>
            <person name="O'Brien K.P."/>
            <person name="Wilkinson P."/>
            <person name="Bodenteich A."/>
            <person name="Hartman K."/>
            <person name="Hu X."/>
            <person name="Khan A.S."/>
            <person name="Lane L."/>
            <person name="Tilahun Y."/>
            <person name="Wright H."/>
        </authorList>
    </citation>
    <scope>NUCLEOTIDE SEQUENCE [LARGE SCALE GENOMIC DNA]</scope>
</reference>
<reference key="5">
    <citation type="submission" date="2005-07" db="EMBL/GenBank/DDBJ databases">
        <authorList>
            <person name="Mural R.J."/>
            <person name="Istrail S."/>
            <person name="Sutton G.G."/>
            <person name="Florea L."/>
            <person name="Halpern A.L."/>
            <person name="Mobarry C.M."/>
            <person name="Lippert R."/>
            <person name="Walenz B."/>
            <person name="Shatkay H."/>
            <person name="Dew I."/>
            <person name="Miller J.R."/>
            <person name="Flanigan M.J."/>
            <person name="Edwards N.J."/>
            <person name="Bolanos R."/>
            <person name="Fasulo D."/>
            <person name="Halldorsson B.V."/>
            <person name="Hannenhalli S."/>
            <person name="Turner R."/>
            <person name="Yooseph S."/>
            <person name="Lu F."/>
            <person name="Nusskern D.R."/>
            <person name="Shue B.C."/>
            <person name="Zheng X.H."/>
            <person name="Zhong F."/>
            <person name="Delcher A.L."/>
            <person name="Huson D.H."/>
            <person name="Kravitz S.A."/>
            <person name="Mouchard L."/>
            <person name="Reinert K."/>
            <person name="Remington K.A."/>
            <person name="Clark A.G."/>
            <person name="Waterman M.S."/>
            <person name="Eichler E.E."/>
            <person name="Adams M.D."/>
            <person name="Hunkapiller M.W."/>
            <person name="Myers E.W."/>
            <person name="Venter J.C."/>
        </authorList>
    </citation>
    <scope>NUCLEOTIDE SEQUENCE [LARGE SCALE GENOMIC DNA]</scope>
</reference>
<reference key="6">
    <citation type="journal article" date="2004" name="Genome Res.">
        <title>The status, quality, and expansion of the NIH full-length cDNA project: the Mammalian Gene Collection (MGC).</title>
        <authorList>
            <consortium name="The MGC Project Team"/>
        </authorList>
    </citation>
    <scope>NUCLEOTIDE SEQUENCE [LARGE SCALE MRNA] (ISOFORM 1)</scope>
    <source>
        <tissue>Brain</tissue>
    </source>
</reference>
<reference key="7">
    <citation type="journal article" date="2005" name="Biochem. J.">
        <title>Human ADA2 belongs to a new family of growth factors with adenosine deaminase activity.</title>
        <authorList>
            <person name="Zavialov A.V."/>
            <person name="Engstroem A."/>
        </authorList>
    </citation>
    <scope>CATALYTIC ACTIVITY</scope>
    <scope>BIOPHYSICOCHEMICAL PROPERTIES</scope>
    <scope>TISSUE SPECIFICITY</scope>
    <scope>IDENTIFICATION BY MASS SPECTROMETRY</scope>
    <scope>HEPARIN-BINDING</scope>
    <scope>SUBCELLULAR LOCATION</scope>
</reference>
<reference key="8">
    <citation type="journal article" date="2009" name="J. Proteome Res.">
        <title>Glycoproteomics analysis of human liver tissue by combination of multiple enzyme digestion and hydrazide chemistry.</title>
        <authorList>
            <person name="Chen R."/>
            <person name="Jiang X."/>
            <person name="Sun D."/>
            <person name="Han G."/>
            <person name="Wang F."/>
            <person name="Ye M."/>
            <person name="Wang L."/>
            <person name="Zou H."/>
        </authorList>
    </citation>
    <scope>GLYCOSYLATION [LARGE SCALE ANALYSIS] AT ASN-174 AND ASN-378</scope>
    <source>
        <tissue>Liver</tissue>
    </source>
</reference>
<reference key="9">
    <citation type="journal article" date="2010" name="J. Leukoc. Biol.">
        <title>Human adenosine deaminase 2 induces differentiation of monocytes into macrophages and stimulates proliferation of T helper cells and macrophages.</title>
        <authorList>
            <person name="Zavialov A.V."/>
            <person name="Gracia E."/>
            <person name="Glaichenhaus N."/>
            <person name="Franco R."/>
            <person name="Zavialov A.V."/>
            <person name="Lauvau G."/>
        </authorList>
    </citation>
    <scope>FUNCTION</scope>
    <scope>CATALYTIC ACTIVITY</scope>
    <scope>SUBCELLULAR LOCATION</scope>
    <scope>HEPARIN-BINDING</scope>
    <scope>SUBUNIT</scope>
</reference>
<reference key="10">
    <citation type="journal article" date="2015" name="Proteomics">
        <title>N-terminome analysis of the human mitochondrial proteome.</title>
        <authorList>
            <person name="Vaca Jacome A.S."/>
            <person name="Rabilloud T."/>
            <person name="Schaeffer-Reiss C."/>
            <person name="Rompais M."/>
            <person name="Ayoub D."/>
            <person name="Lane L."/>
            <person name="Bairoch A."/>
            <person name="Van Dorsselaer A."/>
            <person name="Carapito C."/>
        </authorList>
    </citation>
    <scope>IDENTIFICATION BY MASS SPECTROMETRY [LARGE SCALE ANALYSIS]</scope>
</reference>
<reference key="11">
    <citation type="journal article" date="2010" name="J. Biol. Chem.">
        <title>Structural basis for the growth factor activity of human adenosine deaminase ADA2.</title>
        <authorList>
            <person name="Zavialov A.V."/>
            <person name="Yu X."/>
            <person name="Spillmann D."/>
            <person name="Lauvau G."/>
            <person name="Zavialov A.V."/>
        </authorList>
    </citation>
    <scope>X-RAY CRYSTALLOGRAPHY (2.00 ANGSTROMS) OF 29-511 IN COMPLEX WITH ZINC IONS AND TRANSITION STATE ANALOG COFORMYCIN</scope>
    <scope>FUNCTION</scope>
    <scope>COFACTOR</scope>
    <scope>SUBCELLULAR LOCATION</scope>
    <scope>SUBUNIT</scope>
    <scope>DISULFIDE BOND</scope>
    <scope>DOMAINS</scope>
    <scope>GLYCOSAMINOCLYCAN BINDING</scope>
    <scope>MUTAGENESIS OF CYS-137 AND TRP-362</scope>
    <scope>GLYCOSYLATION AT ASN-127; ASN-185 AND ASN-378</scope>
</reference>
<reference key="12">
    <citation type="journal article" date="2014" name="N. Engl. J. Med.">
        <title>Early-onset stroke and vasculopathy associated with mutations in ADA2.</title>
        <authorList>
            <person name="Zhou Q."/>
            <person name="Yang D."/>
            <person name="Ombrello A.K."/>
            <person name="Zavialov A.V."/>
            <person name="Toro C."/>
            <person name="Zavialov A.V."/>
            <person name="Stone D.L."/>
            <person name="Chae J.J."/>
            <person name="Rosenzweig S.D."/>
            <person name="Bishop K."/>
            <person name="Barron K.S."/>
            <person name="Kuehn H.S."/>
            <person name="Hoffmann P."/>
            <person name="Negro A."/>
            <person name="Tsai W.L."/>
            <person name="Cowen E.W."/>
            <person name="Pei W."/>
            <person name="Milner J.D."/>
            <person name="Silvin C."/>
            <person name="Heller T."/>
            <person name="Chin D.T."/>
            <person name="Patronas N.J."/>
            <person name="Barber J.S."/>
            <person name="Lee C.C."/>
            <person name="Wood G.M."/>
            <person name="Ling A."/>
            <person name="Kelly S.J."/>
            <person name="Kleiner D.E."/>
            <person name="Mullikin J.C."/>
            <person name="Ganson N.J."/>
            <person name="Kong H.H."/>
            <person name="Hambleton S."/>
            <person name="Candotti F."/>
            <person name="Quezado M.M."/>
            <person name="Calvo K.R."/>
            <person name="Alao H."/>
            <person name="Barham B.K."/>
            <person name="Jones A."/>
            <person name="Meschia J.F."/>
            <person name="Worrall B.B."/>
            <person name="Kasner S.E."/>
            <person name="Rich S.S."/>
            <person name="Goldbach-Mansky R."/>
            <person name="Abinun M."/>
            <person name="Chalom E."/>
            <person name="Gotte A.C."/>
            <person name="Punaro M."/>
            <person name="Pascual V."/>
            <person name="Verbsky J.W."/>
            <person name="Torgerson T.R."/>
            <person name="Singer N.G."/>
            <person name="Gershon T.R."/>
            <person name="Ozen S."/>
            <person name="Karadag O."/>
            <person name="Fleisher T.A."/>
            <person name="Remmers E.F."/>
            <person name="Burgess S.M."/>
            <person name="Moir S.L."/>
            <person name="Gadina M."/>
            <person name="Sood R."/>
            <person name="Hershfield M.S."/>
            <person name="Boehm M."/>
            <person name="Kastner D.L."/>
            <person name="Aksentijevich I."/>
        </authorList>
    </citation>
    <scope>INVOLVEMENT IN VAIHS</scope>
    <scope>VARIANTS VAIHS ARG-47; ASP-109; GLN-112; GLN-169 AND CYS-453</scope>
</reference>
<reference key="13">
    <citation type="journal article" date="2014" name="N. Engl. J. Med.">
        <title>Mutant adenosine deaminase 2 in a polyarteritis nodosa vasculopathy.</title>
        <authorList>
            <person name="Navon Elkan P."/>
            <person name="Pierce S.B."/>
            <person name="Segel R."/>
            <person name="Walsh T."/>
            <person name="Barash J."/>
            <person name="Padeh S."/>
            <person name="Zlotogorski A."/>
            <person name="Berkun Y."/>
            <person name="Press J.J."/>
            <person name="Mukamel M."/>
            <person name="Voth I."/>
            <person name="Hashkes P.J."/>
            <person name="Harel L."/>
            <person name="Hoffer V."/>
            <person name="Ling E."/>
            <person name="Yalcinkaya F."/>
            <person name="Kasapcopur O."/>
            <person name="Lee M.K."/>
            <person name="Klevit R.E."/>
            <person name="Renbaum P."/>
            <person name="Weinberg-Shukron A."/>
            <person name="Sener E.F."/>
            <person name="Schormair B."/>
            <person name="Zeligson S."/>
            <person name="Marek-Yagel D."/>
            <person name="Strom T.M."/>
            <person name="Shohat M."/>
            <person name="Singer A."/>
            <person name="Rubinow A."/>
            <person name="Pras E."/>
            <person name="Winkelmann J."/>
            <person name="Tekin M."/>
            <person name="Anikster Y."/>
            <person name="King M.C."/>
            <person name="Levy-Lahad E."/>
        </authorList>
    </citation>
    <scope>VARIANTS VAIHS VAL-47; ARG-47; GLN-169; LEU-251 AND SER-264</scope>
</reference>
<reference key="14">
    <citation type="journal article" date="2014" name="N. Engl. J. Med.">
        <title>Mutant ADA2 in vasculopathies.</title>
        <authorList>
            <person name="Bras J."/>
            <person name="Guerreiro R."/>
            <person name="Santo G.C."/>
        </authorList>
    </citation>
    <scope>INVOLVEMENT IN SNDNS</scope>
    <scope>VARIANTS SNDNS ALA-119 AND SER-142</scope>
</reference>
<dbReference type="EC" id="3.5.4.4" evidence="4 7"/>
<dbReference type="EMBL" id="AF190746">
    <property type="protein sequence ID" value="AAF65941.1"/>
    <property type="molecule type" value="mRNA"/>
</dbReference>
<dbReference type="EMBL" id="CR456417">
    <property type="protein sequence ID" value="CAG30303.1"/>
    <property type="molecule type" value="mRNA"/>
</dbReference>
<dbReference type="EMBL" id="AK027682">
    <property type="protein sequence ID" value="BAB55293.1"/>
    <property type="molecule type" value="mRNA"/>
</dbReference>
<dbReference type="EMBL" id="AK292689">
    <property type="protein sequence ID" value="BAF85378.1"/>
    <property type="molecule type" value="mRNA"/>
</dbReference>
<dbReference type="EMBL" id="AK074702">
    <property type="protein sequence ID" value="BAC11148.1"/>
    <property type="molecule type" value="mRNA"/>
</dbReference>
<dbReference type="EMBL" id="AC005300">
    <property type="status" value="NOT_ANNOTATED_CDS"/>
    <property type="molecule type" value="Genomic_DNA"/>
</dbReference>
<dbReference type="EMBL" id="CH471193">
    <property type="protein sequence ID" value="EAW57750.1"/>
    <property type="molecule type" value="Genomic_DNA"/>
</dbReference>
<dbReference type="EMBL" id="BC051755">
    <property type="protein sequence ID" value="AAH51755.1"/>
    <property type="molecule type" value="mRNA"/>
</dbReference>
<dbReference type="CCDS" id="CCDS13742.1">
    <molecule id="Q9NZK5-1"/>
</dbReference>
<dbReference type="CCDS" id="CCDS13743.1">
    <molecule id="Q9NZK5-2"/>
</dbReference>
<dbReference type="RefSeq" id="NP_001269154.1">
    <molecule id="Q9NZK5-1"/>
    <property type="nucleotide sequence ID" value="NM_001282225.2"/>
</dbReference>
<dbReference type="RefSeq" id="NP_001269155.1">
    <molecule id="Q9NZK5-1"/>
    <property type="nucleotide sequence ID" value="NM_001282226.2"/>
</dbReference>
<dbReference type="RefSeq" id="NP_001269156.1">
    <property type="nucleotide sequence ID" value="NM_001282227.1"/>
</dbReference>
<dbReference type="RefSeq" id="NP_001269157.1">
    <property type="nucleotide sequence ID" value="NM_001282228.1"/>
</dbReference>
<dbReference type="RefSeq" id="NP_001269158.1">
    <property type="nucleotide sequence ID" value="NM_001282229.1"/>
</dbReference>
<dbReference type="RefSeq" id="NP_803124.1">
    <molecule id="Q9NZK5-2"/>
    <property type="nucleotide sequence ID" value="NM_177405.3"/>
</dbReference>
<dbReference type="RefSeq" id="XP_011544435.1">
    <molecule id="Q9NZK5-1"/>
    <property type="nucleotide sequence ID" value="XM_011546133.3"/>
</dbReference>
<dbReference type="RefSeq" id="XP_054181667.1">
    <molecule id="Q9NZK5-1"/>
    <property type="nucleotide sequence ID" value="XM_054325692.1"/>
</dbReference>
<dbReference type="PDB" id="3LGD">
    <property type="method" value="X-ray"/>
    <property type="resolution" value="2.00 A"/>
    <property type="chains" value="A/B=29-511"/>
</dbReference>
<dbReference type="PDB" id="3LGG">
    <property type="method" value="X-ray"/>
    <property type="resolution" value="2.50 A"/>
    <property type="chains" value="A/B=29-511"/>
</dbReference>
<dbReference type="PDBsum" id="3LGD"/>
<dbReference type="PDBsum" id="3LGG"/>
<dbReference type="SMR" id="Q9NZK5"/>
<dbReference type="BioGRID" id="119736">
    <property type="interactions" value="6"/>
</dbReference>
<dbReference type="FunCoup" id="Q9NZK5">
    <property type="interactions" value="169"/>
</dbReference>
<dbReference type="IntAct" id="Q9NZK5">
    <property type="interactions" value="4"/>
</dbReference>
<dbReference type="STRING" id="9606.ENSP00000382731"/>
<dbReference type="GlyConnect" id="1912">
    <property type="glycosylation" value="8 N-Linked glycans (4 sites)"/>
</dbReference>
<dbReference type="GlyCosmos" id="Q9NZK5">
    <property type="glycosylation" value="4 sites, 8 glycans"/>
</dbReference>
<dbReference type="GlyGen" id="Q9NZK5">
    <property type="glycosylation" value="5 sites, 22 N-linked glycans (4 sites), 1 O-linked glycan (1 site)"/>
</dbReference>
<dbReference type="iPTMnet" id="Q9NZK5"/>
<dbReference type="PhosphoSitePlus" id="Q9NZK5"/>
<dbReference type="BioMuta" id="ADA2"/>
<dbReference type="DMDM" id="122065151"/>
<dbReference type="MassIVE" id="Q9NZK5"/>
<dbReference type="PaxDb" id="9606-ENSP00000382731"/>
<dbReference type="PeptideAtlas" id="Q9NZK5"/>
<dbReference type="ProteomicsDB" id="83424">
    <molecule id="Q9NZK5-1"/>
</dbReference>
<dbReference type="ProteomicsDB" id="83425">
    <molecule id="Q9NZK5-2"/>
</dbReference>
<dbReference type="TopDownProteomics" id="Q9NZK5-1">
    <molecule id="Q9NZK5-1"/>
</dbReference>
<dbReference type="Antibodypedia" id="280">
    <property type="antibodies" value="122 antibodies from 21 providers"/>
</dbReference>
<dbReference type="DNASU" id="51816"/>
<dbReference type="Ensembl" id="ENST00000262607.3">
    <molecule id="Q9NZK5-1"/>
    <property type="protein sequence ID" value="ENSP00000262607.2"/>
    <property type="gene ID" value="ENSG00000093072.19"/>
</dbReference>
<dbReference type="Ensembl" id="ENST00000330232.9">
    <molecule id="Q9NZK5-2"/>
    <property type="protein sequence ID" value="ENSP00000332871.4"/>
    <property type="gene ID" value="ENSG00000093072.19"/>
</dbReference>
<dbReference type="Ensembl" id="ENST00000399837.8">
    <molecule id="Q9NZK5-1"/>
    <property type="protein sequence ID" value="ENSP00000382731.2"/>
    <property type="gene ID" value="ENSG00000093072.19"/>
</dbReference>
<dbReference type="Ensembl" id="ENST00000399839.5">
    <molecule id="Q9NZK5-1"/>
    <property type="protein sequence ID" value="ENSP00000382733.1"/>
    <property type="gene ID" value="ENSG00000093072.19"/>
</dbReference>
<dbReference type="Ensembl" id="ENST00000543038.2">
    <molecule id="Q9NZK5-1"/>
    <property type="protein sequence ID" value="ENSP00000442482.2"/>
    <property type="gene ID" value="ENSG00000093072.19"/>
</dbReference>
<dbReference type="Ensembl" id="ENST00000649310.2">
    <molecule id="Q9NZK5-1"/>
    <property type="protein sequence ID" value="ENSP00000496839.2"/>
    <property type="gene ID" value="ENSG00000093072.19"/>
</dbReference>
<dbReference type="Ensembl" id="ENST00000649746.2">
    <molecule id="Q9NZK5-1"/>
    <property type="protein sequence ID" value="ENSP00000497913.2"/>
    <property type="gene ID" value="ENSG00000093072.19"/>
</dbReference>
<dbReference type="Ensembl" id="ENST00000696196.1">
    <molecule id="Q9NZK5-1"/>
    <property type="protein sequence ID" value="ENSP00000512479.1"/>
    <property type="gene ID" value="ENSG00000093072.19"/>
</dbReference>
<dbReference type="Ensembl" id="ENST00000696197.1">
    <molecule id="Q9NZK5-1"/>
    <property type="protein sequence ID" value="ENSP00000512480.1"/>
    <property type="gene ID" value="ENSG00000093072.19"/>
</dbReference>
<dbReference type="Ensembl" id="ENST00000696225.1">
    <molecule id="Q9NZK5-1"/>
    <property type="protein sequence ID" value="ENSP00000512491.1"/>
    <property type="gene ID" value="ENSG00000093072.19"/>
</dbReference>
<dbReference type="GeneID" id="51816"/>
<dbReference type="KEGG" id="hsa:51816"/>
<dbReference type="MANE-Select" id="ENST00000399837.8">
    <property type="protein sequence ID" value="ENSP00000382731.2"/>
    <property type="RefSeq nucleotide sequence ID" value="NM_001282225.2"/>
    <property type="RefSeq protein sequence ID" value="NP_001269154.1"/>
</dbReference>
<dbReference type="UCSC" id="uc002zmj.3">
    <molecule id="Q9NZK5-1"/>
    <property type="organism name" value="human"/>
</dbReference>
<dbReference type="AGR" id="HGNC:1839"/>
<dbReference type="CTD" id="51816"/>
<dbReference type="DisGeNET" id="51816"/>
<dbReference type="GeneCards" id="ADA2"/>
<dbReference type="GeneReviews" id="ADA2"/>
<dbReference type="HGNC" id="HGNC:1839">
    <property type="gene designation" value="ADA2"/>
</dbReference>
<dbReference type="HPA" id="ENSG00000093072">
    <property type="expression patterns" value="Tissue enhanced (lymphoid)"/>
</dbReference>
<dbReference type="MalaCards" id="ADA2"/>
<dbReference type="MIM" id="182410">
    <property type="type" value="phenotype"/>
</dbReference>
<dbReference type="MIM" id="607575">
    <property type="type" value="gene"/>
</dbReference>
<dbReference type="MIM" id="615688">
    <property type="type" value="phenotype"/>
</dbReference>
<dbReference type="neXtProt" id="NX_Q9NZK5"/>
<dbReference type="OpenTargets" id="ENSG00000093072"/>
<dbReference type="Orphanet" id="404553">
    <property type="disease" value="Deficiency of adenosine deaminase 2"/>
</dbReference>
<dbReference type="Orphanet" id="124">
    <property type="disease" value="Diamond-Blackfan anemia"/>
</dbReference>
<dbReference type="Orphanet" id="820">
    <property type="disease" value="Sneddon syndrome"/>
</dbReference>
<dbReference type="PharmGKB" id="PA26382"/>
<dbReference type="VEuPathDB" id="HostDB:ENSG00000093072"/>
<dbReference type="eggNOG" id="KOG1097">
    <property type="taxonomic scope" value="Eukaryota"/>
</dbReference>
<dbReference type="GeneTree" id="ENSGT00950000183113"/>
<dbReference type="HOGENOM" id="CLU_022829_0_0_1"/>
<dbReference type="InParanoid" id="Q9NZK5"/>
<dbReference type="OMA" id="SMKQCIE"/>
<dbReference type="OrthoDB" id="7202371at2759"/>
<dbReference type="PAN-GO" id="Q9NZK5">
    <property type="GO annotations" value="4 GO annotations based on evolutionary models"/>
</dbReference>
<dbReference type="PhylomeDB" id="Q9NZK5"/>
<dbReference type="TreeFam" id="TF324524"/>
<dbReference type="BRENDA" id="3.5.4.4">
    <property type="organism ID" value="2681"/>
</dbReference>
<dbReference type="PathwayCommons" id="Q9NZK5"/>
<dbReference type="Reactome" id="R-HSA-5683826">
    <property type="pathway name" value="Surfactant metabolism"/>
</dbReference>
<dbReference type="Reactome" id="R-HSA-6798695">
    <property type="pathway name" value="Neutrophil degranulation"/>
</dbReference>
<dbReference type="BioGRID-ORCS" id="51816">
    <property type="hits" value="14 hits in 1148 CRISPR screens"/>
</dbReference>
<dbReference type="ChiTaRS" id="CECR1">
    <property type="organism name" value="human"/>
</dbReference>
<dbReference type="EvolutionaryTrace" id="Q9NZK5"/>
<dbReference type="GeneWiki" id="CECR1"/>
<dbReference type="GenomeRNAi" id="51816"/>
<dbReference type="Pharos" id="Q9NZK5">
    <property type="development level" value="Tbio"/>
</dbReference>
<dbReference type="PRO" id="PR:Q9NZK5"/>
<dbReference type="Proteomes" id="UP000005640">
    <property type="component" value="Chromosome 22"/>
</dbReference>
<dbReference type="RNAct" id="Q9NZK5">
    <property type="molecule type" value="protein"/>
</dbReference>
<dbReference type="Bgee" id="ENSG00000093072">
    <property type="expression patterns" value="Expressed in monocyte and 176 other cell types or tissues"/>
</dbReference>
<dbReference type="ExpressionAtlas" id="Q9NZK5">
    <property type="expression patterns" value="baseline and differential"/>
</dbReference>
<dbReference type="GO" id="GO:0035578">
    <property type="term" value="C:azurophil granule lumen"/>
    <property type="evidence" value="ECO:0000304"/>
    <property type="project" value="Reactome"/>
</dbReference>
<dbReference type="GO" id="GO:0005576">
    <property type="term" value="C:extracellular region"/>
    <property type="evidence" value="ECO:0000304"/>
    <property type="project" value="Reactome"/>
</dbReference>
<dbReference type="GO" id="GO:0005615">
    <property type="term" value="C:extracellular space"/>
    <property type="evidence" value="ECO:0000314"/>
    <property type="project" value="UniProtKB"/>
</dbReference>
<dbReference type="GO" id="GO:0004000">
    <property type="term" value="F:adenosine deaminase activity"/>
    <property type="evidence" value="ECO:0000314"/>
    <property type="project" value="UniProtKB"/>
</dbReference>
<dbReference type="GO" id="GO:0031685">
    <property type="term" value="F:adenosine receptor binding"/>
    <property type="evidence" value="ECO:0000314"/>
    <property type="project" value="UniProtKB"/>
</dbReference>
<dbReference type="GO" id="GO:0008083">
    <property type="term" value="F:growth factor activity"/>
    <property type="evidence" value="ECO:0000303"/>
    <property type="project" value="UniProtKB"/>
</dbReference>
<dbReference type="GO" id="GO:0008201">
    <property type="term" value="F:heparin binding"/>
    <property type="evidence" value="ECO:0007669"/>
    <property type="project" value="UniProtKB-KW"/>
</dbReference>
<dbReference type="GO" id="GO:0042803">
    <property type="term" value="F:protein homodimerization activity"/>
    <property type="evidence" value="ECO:0000353"/>
    <property type="project" value="UniProtKB"/>
</dbReference>
<dbReference type="GO" id="GO:0043394">
    <property type="term" value="F:proteoglycan binding"/>
    <property type="evidence" value="ECO:0000314"/>
    <property type="project" value="UniProtKB"/>
</dbReference>
<dbReference type="GO" id="GO:0008270">
    <property type="term" value="F:zinc ion binding"/>
    <property type="evidence" value="ECO:0000314"/>
    <property type="project" value="UniProtKB"/>
</dbReference>
<dbReference type="GO" id="GO:0006154">
    <property type="term" value="P:adenosine catabolic process"/>
    <property type="evidence" value="ECO:0000314"/>
    <property type="project" value="UniProtKB"/>
</dbReference>
<dbReference type="GO" id="GO:0046103">
    <property type="term" value="P:inosine biosynthetic process"/>
    <property type="evidence" value="ECO:0000318"/>
    <property type="project" value="GO_Central"/>
</dbReference>
<dbReference type="CDD" id="cd01321">
    <property type="entry name" value="ADGF"/>
    <property type="match status" value="1"/>
</dbReference>
<dbReference type="FunFam" id="3.20.20.140:FF:000017">
    <property type="entry name" value="Adenosine deaminase 2"/>
    <property type="match status" value="1"/>
</dbReference>
<dbReference type="Gene3D" id="3.20.20.140">
    <property type="entry name" value="Metal-dependent hydrolases"/>
    <property type="match status" value="1"/>
</dbReference>
<dbReference type="InterPro" id="IPR001365">
    <property type="entry name" value="A_deaminase_dom"/>
</dbReference>
<dbReference type="InterPro" id="IPR013659">
    <property type="entry name" value="A_deaminase_N"/>
</dbReference>
<dbReference type="InterPro" id="IPR006331">
    <property type="entry name" value="ADGF"/>
</dbReference>
<dbReference type="InterPro" id="IPR006330">
    <property type="entry name" value="Ado/ade_deaminase"/>
</dbReference>
<dbReference type="InterPro" id="IPR032466">
    <property type="entry name" value="Metal_Hydrolase"/>
</dbReference>
<dbReference type="NCBIfam" id="TIGR01431">
    <property type="entry name" value="adm_rel"/>
    <property type="match status" value="1"/>
</dbReference>
<dbReference type="PANTHER" id="PTHR11409">
    <property type="entry name" value="ADENOSINE DEAMINASE"/>
    <property type="match status" value="1"/>
</dbReference>
<dbReference type="PANTHER" id="PTHR11409:SF39">
    <property type="entry name" value="ADENOSINE DEAMINASE 2"/>
    <property type="match status" value="1"/>
</dbReference>
<dbReference type="Pfam" id="PF00962">
    <property type="entry name" value="A_deaminase"/>
    <property type="match status" value="1"/>
</dbReference>
<dbReference type="Pfam" id="PF08451">
    <property type="entry name" value="A_deaminase_N"/>
    <property type="match status" value="1"/>
</dbReference>
<dbReference type="SUPFAM" id="SSF51556">
    <property type="entry name" value="Metallo-dependent hydrolases"/>
    <property type="match status" value="1"/>
</dbReference>
<sequence length="511" mass="58934">MLVDGPSERPALCFLLLAVAMSFFGSALSIDETRAHLLLKEKMMRLGGRLVLNTKEELANERLMTLKIAEMKEAMRTLIFPPSMHFFQAKHLIERSQVFNILRMMPKGAALHLHDIGIVTMDWLVRNVTYRPHCHICFTPRGIMQFRFAHPTPRPSEKCSKWILLEDYRKRVQNVTEFDDSLLRNFTLVTQHPEVIYTNQNVVWSKFETIFFTISGLIHYAPVFRDYVFRSMQEFYEDNVLYMEIRARLLPVYELSGEHHDEEWSVKTYQEVAQKFVETHPEFIGIKIIYSDHRSKDVAVIAESIRMAMGLRIKFPTVVAGFDLVGHEDTGHSLHDYKEALMIPAKDGVKLPYFFHAGETDWQGTSIDRNILDALMLNTTRIGHGFALSKHPAVRTYSWKKDIPIEVCPISNQVLKLVSDLRNHPVATLMATGHPMVISSDDPAMFGAKGLSYDFYEVFMGIGGMKADLRTLKQLAMNSIKYSTLLESEKNTFMEIWKKRWDKFIADVATK</sequence>